<name>GSA_PARC0</name>
<sequence length="437" mass="46319">MTPSTDLNLPLFERAKALIPGGVNSPVRAFRAVGGTPRFVQRAQGAYFWDANGQRFIDYIGSWGPMILGHGHPAVLEAVQKAALDGFSFGAPTEREVELAEEILRHVPSMEMIRLVSSGTEAGMSAIRLARGATGRSRIIKFNGCYHGHADALLVKAGSGLATFGHATSAGVPAEVVQHTLVLEYNDIAQLEEAFALHGSEIAGLMIEPIAGNMNFVRASVPFMRRCRELCTQHGALLVFDEVMTGFRVALGSAQSVYARDIPGFQPDITVLGKVIGGGMPLAAFGGPRAIMEQLAPLGPVYQAGTLSGNPVATACGLATLREIARPGFYEALGERTRALTGGLADAARAEGLPFSADSEGGMFGFFLLPELPRNYPTVMTTDGARFNALFHGLLDRGVYIAPALYEAGFVSSAHSAQDIDETIAAAREVFRLVSAG</sequence>
<evidence type="ECO:0000255" key="1">
    <source>
        <dbReference type="HAMAP-Rule" id="MF_00375"/>
    </source>
</evidence>
<keyword id="KW-0963">Cytoplasm</keyword>
<keyword id="KW-0413">Isomerase</keyword>
<keyword id="KW-0627">Porphyrin biosynthesis</keyword>
<keyword id="KW-0663">Pyridoxal phosphate</keyword>
<comment type="catalytic activity">
    <reaction evidence="1">
        <text>(S)-4-amino-5-oxopentanoate = 5-aminolevulinate</text>
        <dbReference type="Rhea" id="RHEA:14265"/>
        <dbReference type="ChEBI" id="CHEBI:57501"/>
        <dbReference type="ChEBI" id="CHEBI:356416"/>
        <dbReference type="EC" id="5.4.3.8"/>
    </reaction>
</comment>
<comment type="cofactor">
    <cofactor evidence="1">
        <name>pyridoxal 5'-phosphate</name>
        <dbReference type="ChEBI" id="CHEBI:597326"/>
    </cofactor>
</comment>
<comment type="pathway">
    <text evidence="1">Porphyrin-containing compound metabolism; protoporphyrin-IX biosynthesis; 5-aminolevulinate from L-glutamyl-tRNA(Glu): step 2/2.</text>
</comment>
<comment type="subunit">
    <text evidence="1">Homodimer.</text>
</comment>
<comment type="subcellular location">
    <subcellularLocation>
        <location evidence="1">Cytoplasm</location>
    </subcellularLocation>
</comment>
<comment type="similarity">
    <text evidence="1">Belongs to the class-III pyridoxal-phosphate-dependent aminotransferase family. HemL subfamily.</text>
</comment>
<dbReference type="EC" id="5.4.3.8" evidence="1"/>
<dbReference type="EMBL" id="CP000512">
    <property type="protein sequence ID" value="ABM31496.1"/>
    <property type="molecule type" value="Genomic_DNA"/>
</dbReference>
<dbReference type="RefSeq" id="WP_011794054.1">
    <property type="nucleotide sequence ID" value="NC_008752.1"/>
</dbReference>
<dbReference type="SMR" id="A1TKK8"/>
<dbReference type="STRING" id="397945.Aave_0898"/>
<dbReference type="KEGG" id="aav:Aave_0898"/>
<dbReference type="eggNOG" id="COG0001">
    <property type="taxonomic scope" value="Bacteria"/>
</dbReference>
<dbReference type="HOGENOM" id="CLU_016922_1_5_4"/>
<dbReference type="OrthoDB" id="3398487at2"/>
<dbReference type="UniPathway" id="UPA00251">
    <property type="reaction ID" value="UER00317"/>
</dbReference>
<dbReference type="Proteomes" id="UP000002596">
    <property type="component" value="Chromosome"/>
</dbReference>
<dbReference type="GO" id="GO:0005737">
    <property type="term" value="C:cytoplasm"/>
    <property type="evidence" value="ECO:0007669"/>
    <property type="project" value="UniProtKB-SubCell"/>
</dbReference>
<dbReference type="GO" id="GO:0042286">
    <property type="term" value="F:glutamate-1-semialdehyde 2,1-aminomutase activity"/>
    <property type="evidence" value="ECO:0007669"/>
    <property type="project" value="UniProtKB-UniRule"/>
</dbReference>
<dbReference type="GO" id="GO:0030170">
    <property type="term" value="F:pyridoxal phosphate binding"/>
    <property type="evidence" value="ECO:0007669"/>
    <property type="project" value="InterPro"/>
</dbReference>
<dbReference type="GO" id="GO:0008483">
    <property type="term" value="F:transaminase activity"/>
    <property type="evidence" value="ECO:0007669"/>
    <property type="project" value="InterPro"/>
</dbReference>
<dbReference type="GO" id="GO:0006782">
    <property type="term" value="P:protoporphyrinogen IX biosynthetic process"/>
    <property type="evidence" value="ECO:0007669"/>
    <property type="project" value="UniProtKB-UniRule"/>
</dbReference>
<dbReference type="CDD" id="cd00610">
    <property type="entry name" value="OAT_like"/>
    <property type="match status" value="1"/>
</dbReference>
<dbReference type="FunFam" id="3.40.640.10:FF:000021">
    <property type="entry name" value="Glutamate-1-semialdehyde 2,1-aminomutase"/>
    <property type="match status" value="1"/>
</dbReference>
<dbReference type="Gene3D" id="3.90.1150.10">
    <property type="entry name" value="Aspartate Aminotransferase, domain 1"/>
    <property type="match status" value="1"/>
</dbReference>
<dbReference type="Gene3D" id="3.40.640.10">
    <property type="entry name" value="Type I PLP-dependent aspartate aminotransferase-like (Major domain)"/>
    <property type="match status" value="1"/>
</dbReference>
<dbReference type="HAMAP" id="MF_00375">
    <property type="entry name" value="HemL_aminotrans_3"/>
    <property type="match status" value="1"/>
</dbReference>
<dbReference type="InterPro" id="IPR004639">
    <property type="entry name" value="4pyrrol_synth_GluAld_NH2Trfase"/>
</dbReference>
<dbReference type="InterPro" id="IPR005814">
    <property type="entry name" value="Aminotrans_3"/>
</dbReference>
<dbReference type="InterPro" id="IPR015424">
    <property type="entry name" value="PyrdxlP-dep_Trfase"/>
</dbReference>
<dbReference type="InterPro" id="IPR015421">
    <property type="entry name" value="PyrdxlP-dep_Trfase_major"/>
</dbReference>
<dbReference type="InterPro" id="IPR015422">
    <property type="entry name" value="PyrdxlP-dep_Trfase_small"/>
</dbReference>
<dbReference type="NCBIfam" id="TIGR00713">
    <property type="entry name" value="hemL"/>
    <property type="match status" value="1"/>
</dbReference>
<dbReference type="NCBIfam" id="NF000818">
    <property type="entry name" value="PRK00062.1"/>
    <property type="match status" value="1"/>
</dbReference>
<dbReference type="PANTHER" id="PTHR43713">
    <property type="entry name" value="GLUTAMATE-1-SEMIALDEHYDE 2,1-AMINOMUTASE"/>
    <property type="match status" value="1"/>
</dbReference>
<dbReference type="PANTHER" id="PTHR43713:SF3">
    <property type="entry name" value="GLUTAMATE-1-SEMIALDEHYDE 2,1-AMINOMUTASE 1, CHLOROPLASTIC-RELATED"/>
    <property type="match status" value="1"/>
</dbReference>
<dbReference type="Pfam" id="PF00202">
    <property type="entry name" value="Aminotran_3"/>
    <property type="match status" value="1"/>
</dbReference>
<dbReference type="SUPFAM" id="SSF53383">
    <property type="entry name" value="PLP-dependent transferases"/>
    <property type="match status" value="1"/>
</dbReference>
<accession>A1TKK8</accession>
<protein>
    <recommendedName>
        <fullName evidence="1">Glutamate-1-semialdehyde 2,1-aminomutase</fullName>
        <shortName evidence="1">GSA</shortName>
        <ecNumber evidence="1">5.4.3.8</ecNumber>
    </recommendedName>
    <alternativeName>
        <fullName evidence="1">Glutamate-1-semialdehyde aminotransferase</fullName>
        <shortName evidence="1">GSA-AT</shortName>
    </alternativeName>
</protein>
<gene>
    <name evidence="1" type="primary">hemL</name>
    <name type="ordered locus">Aave_0898</name>
</gene>
<reference key="1">
    <citation type="submission" date="2006-12" db="EMBL/GenBank/DDBJ databases">
        <title>Complete sequence of Acidovorax avenae subsp. citrulli AAC00-1.</title>
        <authorList>
            <person name="Copeland A."/>
            <person name="Lucas S."/>
            <person name="Lapidus A."/>
            <person name="Barry K."/>
            <person name="Detter J.C."/>
            <person name="Glavina del Rio T."/>
            <person name="Dalin E."/>
            <person name="Tice H."/>
            <person name="Pitluck S."/>
            <person name="Kiss H."/>
            <person name="Brettin T."/>
            <person name="Bruce D."/>
            <person name="Han C."/>
            <person name="Tapia R."/>
            <person name="Gilna P."/>
            <person name="Schmutz J."/>
            <person name="Larimer F."/>
            <person name="Land M."/>
            <person name="Hauser L."/>
            <person name="Kyrpides N."/>
            <person name="Kim E."/>
            <person name="Stahl D."/>
            <person name="Richardson P."/>
        </authorList>
    </citation>
    <scope>NUCLEOTIDE SEQUENCE [LARGE SCALE GENOMIC DNA]</scope>
    <source>
        <strain>AAC00-1</strain>
    </source>
</reference>
<proteinExistence type="inferred from homology"/>
<organism>
    <name type="scientific">Paracidovorax citrulli (strain AAC00-1)</name>
    <name type="common">Acidovorax citrulli</name>
    <dbReference type="NCBI Taxonomy" id="397945"/>
    <lineage>
        <taxon>Bacteria</taxon>
        <taxon>Pseudomonadati</taxon>
        <taxon>Pseudomonadota</taxon>
        <taxon>Betaproteobacteria</taxon>
        <taxon>Burkholderiales</taxon>
        <taxon>Comamonadaceae</taxon>
        <taxon>Paracidovorax</taxon>
    </lineage>
</organism>
<feature type="chain" id="PRO_0000300887" description="Glutamate-1-semialdehyde 2,1-aminomutase">
    <location>
        <begin position="1"/>
        <end position="437"/>
    </location>
</feature>
<feature type="modified residue" description="N6-(pyridoxal phosphate)lysine" evidence="1">
    <location>
        <position position="274"/>
    </location>
</feature>